<reference key="1">
    <citation type="journal article" date="2009" name="Vaccine">
        <title>Whole genome sequence analysis of Mycobacterium bovis bacillus Calmette-Guerin (BCG) Tokyo 172: a comparative study of BCG vaccine substrains.</title>
        <authorList>
            <person name="Seki M."/>
            <person name="Honda I."/>
            <person name="Fujita I."/>
            <person name="Yano I."/>
            <person name="Yamamoto S."/>
            <person name="Koyama A."/>
        </authorList>
    </citation>
    <scope>NUCLEOTIDE SEQUENCE [LARGE SCALE GENOMIC DNA]</scope>
    <source>
        <strain>BCG / Tokyo 172 / ATCC 35737 / TMC 1019</strain>
    </source>
</reference>
<organism>
    <name type="scientific">Mycobacterium bovis (strain BCG / Tokyo 172 / ATCC 35737 / TMC 1019)</name>
    <dbReference type="NCBI Taxonomy" id="561275"/>
    <lineage>
        <taxon>Bacteria</taxon>
        <taxon>Bacillati</taxon>
        <taxon>Actinomycetota</taxon>
        <taxon>Actinomycetes</taxon>
        <taxon>Mycobacteriales</taxon>
        <taxon>Mycobacteriaceae</taxon>
        <taxon>Mycobacterium</taxon>
        <taxon>Mycobacterium tuberculosis complex</taxon>
    </lineage>
</organism>
<feature type="chain" id="PRO_1000148389" description="UPF0301 protein JTY_0039">
    <location>
        <begin position="1"/>
        <end position="202"/>
    </location>
</feature>
<protein>
    <recommendedName>
        <fullName evidence="1">UPF0301 protein JTY_0039</fullName>
    </recommendedName>
</protein>
<sequence>MVAPHEDPEDHVAPAAQRVRAGTLLLANTDLLEPTFRRSVIYIVEHNDGGTLGVVLNRPSETAVYNVLPQWAKLAAKPKTMFIGGPVKRDAALCLAVLRVGADPEGVPGLRHVAGRLVMVDLDADPEVLAAAVEGVRIYAGYSGWTIGQLEGEIERDDWIVLSALPSDVLVGPRADLWGQVLRRQPLPLSLLATHPIDLSRN</sequence>
<accession>C1AJ35</accession>
<dbReference type="EMBL" id="AP010918">
    <property type="protein sequence ID" value="BAH24340.1"/>
    <property type="molecule type" value="Genomic_DNA"/>
</dbReference>
<dbReference type="RefSeq" id="WP_003400460.1">
    <property type="nucleotide sequence ID" value="NZ_CP014566.1"/>
</dbReference>
<dbReference type="SMR" id="C1AJ35"/>
<dbReference type="KEGG" id="mbt:JTY_0039"/>
<dbReference type="HOGENOM" id="CLU_057596_2_0_11"/>
<dbReference type="GO" id="GO:0005829">
    <property type="term" value="C:cytosol"/>
    <property type="evidence" value="ECO:0007669"/>
    <property type="project" value="TreeGrafter"/>
</dbReference>
<dbReference type="FunFam" id="3.40.1740.10:FF:000002">
    <property type="entry name" value="UPF0301 protein A5636_14805"/>
    <property type="match status" value="1"/>
</dbReference>
<dbReference type="Gene3D" id="3.40.1740.10">
    <property type="entry name" value="VC0467-like"/>
    <property type="match status" value="1"/>
</dbReference>
<dbReference type="HAMAP" id="MF_00758">
    <property type="entry name" value="UPF0301"/>
    <property type="match status" value="1"/>
</dbReference>
<dbReference type="InterPro" id="IPR003774">
    <property type="entry name" value="AlgH-like"/>
</dbReference>
<dbReference type="NCBIfam" id="NF001269">
    <property type="entry name" value="PRK00228.2-1"/>
    <property type="match status" value="1"/>
</dbReference>
<dbReference type="NCBIfam" id="NF001272">
    <property type="entry name" value="PRK00228.2-4"/>
    <property type="match status" value="1"/>
</dbReference>
<dbReference type="PANTHER" id="PTHR30327">
    <property type="entry name" value="UNCHARACTERIZED PROTEIN YQGE"/>
    <property type="match status" value="1"/>
</dbReference>
<dbReference type="PANTHER" id="PTHR30327:SF1">
    <property type="entry name" value="UPF0301 PROTEIN YQGE"/>
    <property type="match status" value="1"/>
</dbReference>
<dbReference type="Pfam" id="PF02622">
    <property type="entry name" value="DUF179"/>
    <property type="match status" value="1"/>
</dbReference>
<dbReference type="SUPFAM" id="SSF143456">
    <property type="entry name" value="VC0467-like"/>
    <property type="match status" value="1"/>
</dbReference>
<proteinExistence type="inferred from homology"/>
<evidence type="ECO:0000255" key="1">
    <source>
        <dbReference type="HAMAP-Rule" id="MF_00758"/>
    </source>
</evidence>
<gene>
    <name type="ordered locus">JTY_0039</name>
</gene>
<comment type="similarity">
    <text evidence="1">Belongs to the UPF0301 (AlgH) family.</text>
</comment>
<name>Y039_MYCBT</name>